<protein>
    <recommendedName>
        <fullName evidence="1">Dephospho-CoA kinase</fullName>
        <ecNumber evidence="1">2.7.1.24</ecNumber>
    </recommendedName>
    <alternativeName>
        <fullName evidence="1">Dephosphocoenzyme A kinase</fullName>
    </alternativeName>
</protein>
<reference key="1">
    <citation type="journal article" date="2002" name="J. Bacteriol.">
        <title>Genome sequence and analysis of the oral bacterium Fusobacterium nucleatum strain ATCC 25586.</title>
        <authorList>
            <person name="Kapatral V."/>
            <person name="Anderson I."/>
            <person name="Ivanova N."/>
            <person name="Reznik G."/>
            <person name="Los T."/>
            <person name="Lykidis A."/>
            <person name="Bhattacharyya A."/>
            <person name="Bartman A."/>
            <person name="Gardner W."/>
            <person name="Grechkin G."/>
            <person name="Zhu L."/>
            <person name="Vasieva O."/>
            <person name="Chu L."/>
            <person name="Kogan Y."/>
            <person name="Chaga O."/>
            <person name="Goltsman E."/>
            <person name="Bernal A."/>
            <person name="Larsen N."/>
            <person name="D'Souza M."/>
            <person name="Walunas T."/>
            <person name="Pusch G."/>
            <person name="Haselkorn R."/>
            <person name="Fonstein M."/>
            <person name="Kyrpides N.C."/>
            <person name="Overbeek R."/>
        </authorList>
    </citation>
    <scope>NUCLEOTIDE SEQUENCE [LARGE SCALE GENOMIC DNA]</scope>
    <source>
        <strain>ATCC 25586 / DSM 15643 / BCRC 10681 / CIP 101130 / JCM 8532 / KCTC 2640 / LMG 13131 / VPI 4355</strain>
    </source>
</reference>
<accession>Q8RHR7</accession>
<keyword id="KW-0067">ATP-binding</keyword>
<keyword id="KW-0173">Coenzyme A biosynthesis</keyword>
<keyword id="KW-0963">Cytoplasm</keyword>
<keyword id="KW-0418">Kinase</keyword>
<keyword id="KW-0547">Nucleotide-binding</keyword>
<keyword id="KW-1185">Reference proteome</keyword>
<keyword id="KW-0808">Transferase</keyword>
<evidence type="ECO:0000255" key="1">
    <source>
        <dbReference type="HAMAP-Rule" id="MF_00376"/>
    </source>
</evidence>
<dbReference type="EC" id="2.7.1.24" evidence="1"/>
<dbReference type="EMBL" id="AE009951">
    <property type="protein sequence ID" value="AAL94031.1"/>
    <property type="molecule type" value="Genomic_DNA"/>
</dbReference>
<dbReference type="RefSeq" id="NP_602732.1">
    <property type="nucleotide sequence ID" value="NC_003454.1"/>
</dbReference>
<dbReference type="SMR" id="Q8RHR7"/>
<dbReference type="FunCoup" id="Q8RHR7">
    <property type="interactions" value="335"/>
</dbReference>
<dbReference type="STRING" id="190304.FN1932"/>
<dbReference type="PaxDb" id="190304-FN1932"/>
<dbReference type="EnsemblBacteria" id="AAL94031">
    <property type="protein sequence ID" value="AAL94031"/>
    <property type="gene ID" value="FN1932"/>
</dbReference>
<dbReference type="KEGG" id="fnu:FN1932"/>
<dbReference type="PATRIC" id="fig|190304.8.peg.407"/>
<dbReference type="eggNOG" id="COG0237">
    <property type="taxonomic scope" value="Bacteria"/>
</dbReference>
<dbReference type="HOGENOM" id="CLU_057180_2_1_0"/>
<dbReference type="InParanoid" id="Q8RHR7"/>
<dbReference type="BioCyc" id="FNUC190304:G1FZS-426-MONOMER"/>
<dbReference type="UniPathway" id="UPA00241">
    <property type="reaction ID" value="UER00356"/>
</dbReference>
<dbReference type="Proteomes" id="UP000002521">
    <property type="component" value="Chromosome"/>
</dbReference>
<dbReference type="GO" id="GO:0005737">
    <property type="term" value="C:cytoplasm"/>
    <property type="evidence" value="ECO:0007669"/>
    <property type="project" value="UniProtKB-SubCell"/>
</dbReference>
<dbReference type="GO" id="GO:0005524">
    <property type="term" value="F:ATP binding"/>
    <property type="evidence" value="ECO:0007669"/>
    <property type="project" value="UniProtKB-UniRule"/>
</dbReference>
<dbReference type="GO" id="GO:0004140">
    <property type="term" value="F:dephospho-CoA kinase activity"/>
    <property type="evidence" value="ECO:0000318"/>
    <property type="project" value="GO_Central"/>
</dbReference>
<dbReference type="GO" id="GO:0015937">
    <property type="term" value="P:coenzyme A biosynthetic process"/>
    <property type="evidence" value="ECO:0000318"/>
    <property type="project" value="GO_Central"/>
</dbReference>
<dbReference type="CDD" id="cd02022">
    <property type="entry name" value="DPCK"/>
    <property type="match status" value="1"/>
</dbReference>
<dbReference type="FunFam" id="3.40.50.300:FF:000991">
    <property type="entry name" value="Dephospho-CoA kinase"/>
    <property type="match status" value="1"/>
</dbReference>
<dbReference type="Gene3D" id="3.40.50.300">
    <property type="entry name" value="P-loop containing nucleotide triphosphate hydrolases"/>
    <property type="match status" value="1"/>
</dbReference>
<dbReference type="HAMAP" id="MF_00376">
    <property type="entry name" value="Dephospho_CoA_kinase"/>
    <property type="match status" value="1"/>
</dbReference>
<dbReference type="InterPro" id="IPR001977">
    <property type="entry name" value="Depp_CoAkinase"/>
</dbReference>
<dbReference type="InterPro" id="IPR027417">
    <property type="entry name" value="P-loop_NTPase"/>
</dbReference>
<dbReference type="NCBIfam" id="TIGR00152">
    <property type="entry name" value="dephospho-CoA kinase"/>
    <property type="match status" value="1"/>
</dbReference>
<dbReference type="PANTHER" id="PTHR10695:SF46">
    <property type="entry name" value="BIFUNCTIONAL COENZYME A SYNTHASE-RELATED"/>
    <property type="match status" value="1"/>
</dbReference>
<dbReference type="PANTHER" id="PTHR10695">
    <property type="entry name" value="DEPHOSPHO-COA KINASE-RELATED"/>
    <property type="match status" value="1"/>
</dbReference>
<dbReference type="Pfam" id="PF01121">
    <property type="entry name" value="CoaE"/>
    <property type="match status" value="1"/>
</dbReference>
<dbReference type="SUPFAM" id="SSF52540">
    <property type="entry name" value="P-loop containing nucleoside triphosphate hydrolases"/>
    <property type="match status" value="1"/>
</dbReference>
<dbReference type="PROSITE" id="PS51219">
    <property type="entry name" value="DPCK"/>
    <property type="match status" value="1"/>
</dbReference>
<organism>
    <name type="scientific">Fusobacterium nucleatum subsp. nucleatum (strain ATCC 25586 / DSM 15643 / BCRC 10681 / CIP 101130 / JCM 8532 / KCTC 2640 / LMG 13131 / VPI 4355)</name>
    <dbReference type="NCBI Taxonomy" id="190304"/>
    <lineage>
        <taxon>Bacteria</taxon>
        <taxon>Fusobacteriati</taxon>
        <taxon>Fusobacteriota</taxon>
        <taxon>Fusobacteriia</taxon>
        <taxon>Fusobacteriales</taxon>
        <taxon>Fusobacteriaceae</taxon>
        <taxon>Fusobacterium</taxon>
    </lineage>
</organism>
<proteinExistence type="inferred from homology"/>
<comment type="function">
    <text evidence="1">Catalyzes the phosphorylation of the 3'-hydroxyl group of dephosphocoenzyme A to form coenzyme A.</text>
</comment>
<comment type="catalytic activity">
    <reaction evidence="1">
        <text>3'-dephospho-CoA + ATP = ADP + CoA + H(+)</text>
        <dbReference type="Rhea" id="RHEA:18245"/>
        <dbReference type="ChEBI" id="CHEBI:15378"/>
        <dbReference type="ChEBI" id="CHEBI:30616"/>
        <dbReference type="ChEBI" id="CHEBI:57287"/>
        <dbReference type="ChEBI" id="CHEBI:57328"/>
        <dbReference type="ChEBI" id="CHEBI:456216"/>
        <dbReference type="EC" id="2.7.1.24"/>
    </reaction>
</comment>
<comment type="pathway">
    <text evidence="1">Cofactor biosynthesis; coenzyme A biosynthesis; CoA from (R)-pantothenate: step 5/5.</text>
</comment>
<comment type="subcellular location">
    <subcellularLocation>
        <location evidence="1">Cytoplasm</location>
    </subcellularLocation>
</comment>
<comment type="similarity">
    <text evidence="1">Belongs to the CoaE family.</text>
</comment>
<feature type="chain" id="PRO_0000172944" description="Dephospho-CoA kinase">
    <location>
        <begin position="1"/>
        <end position="193"/>
    </location>
</feature>
<feature type="domain" description="DPCK" evidence="1">
    <location>
        <begin position="5"/>
        <end position="193"/>
    </location>
</feature>
<feature type="binding site" evidence="1">
    <location>
        <begin position="13"/>
        <end position="18"/>
    </location>
    <ligand>
        <name>ATP</name>
        <dbReference type="ChEBI" id="CHEBI:30616"/>
    </ligand>
</feature>
<name>COAE_FUSNN</name>
<sequence length="193" mass="22199">MSIMIIGLTGGIASGKSTVSKYLAEKGFKVYDADKIAKDISEKKSVQEEIISTFGNKILDKNGNIDRKKLKEIVFENKEKLEKLNGIIHPKVINFYKELKEKKTDKVIIFDVPLLFESGIDKFCDKILVVISDYEVQLNRIIERDKINRELAEKIIKSQLSNEERIKKADVVIENNSNLEDLFKKVERFCETI</sequence>
<gene>
    <name evidence="1" type="primary">coaE</name>
    <name type="ordered locus">FN1932</name>
</gene>